<accession>B1KPJ7</accession>
<gene>
    <name evidence="1" type="primary">bioB</name>
    <name type="ordered locus">Swoo_1866</name>
</gene>
<keyword id="KW-0001">2Fe-2S</keyword>
<keyword id="KW-0004">4Fe-4S</keyword>
<keyword id="KW-0093">Biotin biosynthesis</keyword>
<keyword id="KW-0408">Iron</keyword>
<keyword id="KW-0411">Iron-sulfur</keyword>
<keyword id="KW-0479">Metal-binding</keyword>
<keyword id="KW-1185">Reference proteome</keyword>
<keyword id="KW-0949">S-adenosyl-L-methionine</keyword>
<keyword id="KW-0808">Transferase</keyword>
<sequence>MSEIQLRHDWKRDEIEALFALPMNDLLFEAHSIHRQVYDPNEVQISRLLSIKTGACPEDCKYCPQSARYDTGLEKERLIEIEKVLTEARSAKAAGASRFCMGAAWRNPHARDMPYLKDMVREVKSMGMETCMTLGMLSPDQAGELAEAGLDYYNHNLDTSPEYYGDIITTRTYQDRLDTLSNVRAAGMKVCSGGIVGMGEQATDRSGLLQQLANMEQHPDSVPINMLVKVAGTPFENLEDLDPLVFVRTIAVARILMPHSRVRLSAGREKMSDEMQAMCFFAGANSIFYGCKLLTTNNPEENEDMTLFKRLGLHPEQGKYATIEDDKAVFEKATAKANAIKDKQSSAFYDAAAL</sequence>
<protein>
    <recommendedName>
        <fullName evidence="1">Biotin synthase</fullName>
        <ecNumber evidence="1">2.8.1.6</ecNumber>
    </recommendedName>
</protein>
<proteinExistence type="inferred from homology"/>
<feature type="chain" id="PRO_0000381630" description="Biotin synthase">
    <location>
        <begin position="1"/>
        <end position="354"/>
    </location>
</feature>
<feature type="domain" description="Radical SAM core" evidence="2">
    <location>
        <begin position="41"/>
        <end position="265"/>
    </location>
</feature>
<feature type="binding site" evidence="1">
    <location>
        <position position="56"/>
    </location>
    <ligand>
        <name>[4Fe-4S] cluster</name>
        <dbReference type="ChEBI" id="CHEBI:49883"/>
        <note>4Fe-4S-S-AdoMet</note>
    </ligand>
</feature>
<feature type="binding site" evidence="1">
    <location>
        <position position="60"/>
    </location>
    <ligand>
        <name>[4Fe-4S] cluster</name>
        <dbReference type="ChEBI" id="CHEBI:49883"/>
        <note>4Fe-4S-S-AdoMet</note>
    </ligand>
</feature>
<feature type="binding site" evidence="1">
    <location>
        <position position="63"/>
    </location>
    <ligand>
        <name>[4Fe-4S] cluster</name>
        <dbReference type="ChEBI" id="CHEBI:49883"/>
        <note>4Fe-4S-S-AdoMet</note>
    </ligand>
</feature>
<feature type="binding site" evidence="1">
    <location>
        <position position="100"/>
    </location>
    <ligand>
        <name>[2Fe-2S] cluster</name>
        <dbReference type="ChEBI" id="CHEBI:190135"/>
    </ligand>
</feature>
<feature type="binding site" evidence="1">
    <location>
        <position position="131"/>
    </location>
    <ligand>
        <name>[2Fe-2S] cluster</name>
        <dbReference type="ChEBI" id="CHEBI:190135"/>
    </ligand>
</feature>
<feature type="binding site" evidence="1">
    <location>
        <position position="191"/>
    </location>
    <ligand>
        <name>[2Fe-2S] cluster</name>
        <dbReference type="ChEBI" id="CHEBI:190135"/>
    </ligand>
</feature>
<feature type="binding site" evidence="1">
    <location>
        <position position="263"/>
    </location>
    <ligand>
        <name>[2Fe-2S] cluster</name>
        <dbReference type="ChEBI" id="CHEBI:190135"/>
    </ligand>
</feature>
<dbReference type="EC" id="2.8.1.6" evidence="1"/>
<dbReference type="EMBL" id="CP000961">
    <property type="protein sequence ID" value="ACA86150.1"/>
    <property type="molecule type" value="Genomic_DNA"/>
</dbReference>
<dbReference type="RefSeq" id="WP_012324496.1">
    <property type="nucleotide sequence ID" value="NC_010506.1"/>
</dbReference>
<dbReference type="SMR" id="B1KPJ7"/>
<dbReference type="STRING" id="392500.Swoo_1866"/>
<dbReference type="KEGG" id="swd:Swoo_1866"/>
<dbReference type="eggNOG" id="COG0502">
    <property type="taxonomic scope" value="Bacteria"/>
</dbReference>
<dbReference type="HOGENOM" id="CLU_033172_1_2_6"/>
<dbReference type="UniPathway" id="UPA00078">
    <property type="reaction ID" value="UER00162"/>
</dbReference>
<dbReference type="Proteomes" id="UP000002168">
    <property type="component" value="Chromosome"/>
</dbReference>
<dbReference type="GO" id="GO:0051537">
    <property type="term" value="F:2 iron, 2 sulfur cluster binding"/>
    <property type="evidence" value="ECO:0007669"/>
    <property type="project" value="UniProtKB-KW"/>
</dbReference>
<dbReference type="GO" id="GO:0051539">
    <property type="term" value="F:4 iron, 4 sulfur cluster binding"/>
    <property type="evidence" value="ECO:0007669"/>
    <property type="project" value="UniProtKB-KW"/>
</dbReference>
<dbReference type="GO" id="GO:0004076">
    <property type="term" value="F:biotin synthase activity"/>
    <property type="evidence" value="ECO:0007669"/>
    <property type="project" value="UniProtKB-UniRule"/>
</dbReference>
<dbReference type="GO" id="GO:0005506">
    <property type="term" value="F:iron ion binding"/>
    <property type="evidence" value="ECO:0007669"/>
    <property type="project" value="UniProtKB-UniRule"/>
</dbReference>
<dbReference type="GO" id="GO:0009102">
    <property type="term" value="P:biotin biosynthetic process"/>
    <property type="evidence" value="ECO:0007669"/>
    <property type="project" value="UniProtKB-UniRule"/>
</dbReference>
<dbReference type="CDD" id="cd01335">
    <property type="entry name" value="Radical_SAM"/>
    <property type="match status" value="1"/>
</dbReference>
<dbReference type="FunFam" id="3.20.20.70:FF:000011">
    <property type="entry name" value="Biotin synthase"/>
    <property type="match status" value="1"/>
</dbReference>
<dbReference type="Gene3D" id="3.20.20.70">
    <property type="entry name" value="Aldolase class I"/>
    <property type="match status" value="1"/>
</dbReference>
<dbReference type="HAMAP" id="MF_01694">
    <property type="entry name" value="BioB"/>
    <property type="match status" value="1"/>
</dbReference>
<dbReference type="InterPro" id="IPR013785">
    <property type="entry name" value="Aldolase_TIM"/>
</dbReference>
<dbReference type="InterPro" id="IPR010722">
    <property type="entry name" value="BATS_dom"/>
</dbReference>
<dbReference type="InterPro" id="IPR002684">
    <property type="entry name" value="Biotin_synth/BioAB"/>
</dbReference>
<dbReference type="InterPro" id="IPR024177">
    <property type="entry name" value="Biotin_synthase"/>
</dbReference>
<dbReference type="InterPro" id="IPR006638">
    <property type="entry name" value="Elp3/MiaA/NifB-like_rSAM"/>
</dbReference>
<dbReference type="InterPro" id="IPR007197">
    <property type="entry name" value="rSAM"/>
</dbReference>
<dbReference type="NCBIfam" id="TIGR00433">
    <property type="entry name" value="bioB"/>
    <property type="match status" value="1"/>
</dbReference>
<dbReference type="PANTHER" id="PTHR22976">
    <property type="entry name" value="BIOTIN SYNTHASE"/>
    <property type="match status" value="1"/>
</dbReference>
<dbReference type="PANTHER" id="PTHR22976:SF2">
    <property type="entry name" value="BIOTIN SYNTHASE, MITOCHONDRIAL"/>
    <property type="match status" value="1"/>
</dbReference>
<dbReference type="Pfam" id="PF06968">
    <property type="entry name" value="BATS"/>
    <property type="match status" value="1"/>
</dbReference>
<dbReference type="Pfam" id="PF04055">
    <property type="entry name" value="Radical_SAM"/>
    <property type="match status" value="1"/>
</dbReference>
<dbReference type="PIRSF" id="PIRSF001619">
    <property type="entry name" value="Biotin_synth"/>
    <property type="match status" value="1"/>
</dbReference>
<dbReference type="SFLD" id="SFLDF00272">
    <property type="entry name" value="biotin_synthase"/>
    <property type="match status" value="1"/>
</dbReference>
<dbReference type="SFLD" id="SFLDS00029">
    <property type="entry name" value="Radical_SAM"/>
    <property type="match status" value="1"/>
</dbReference>
<dbReference type="SMART" id="SM00876">
    <property type="entry name" value="BATS"/>
    <property type="match status" value="1"/>
</dbReference>
<dbReference type="SMART" id="SM00729">
    <property type="entry name" value="Elp3"/>
    <property type="match status" value="1"/>
</dbReference>
<dbReference type="SUPFAM" id="SSF102114">
    <property type="entry name" value="Radical SAM enzymes"/>
    <property type="match status" value="1"/>
</dbReference>
<dbReference type="PROSITE" id="PS51918">
    <property type="entry name" value="RADICAL_SAM"/>
    <property type="match status" value="1"/>
</dbReference>
<reference key="1">
    <citation type="submission" date="2008-02" db="EMBL/GenBank/DDBJ databases">
        <title>Complete sequence of Shewanella woodyi ATCC 51908.</title>
        <authorList>
            <consortium name="US DOE Joint Genome Institute"/>
            <person name="Copeland A."/>
            <person name="Lucas S."/>
            <person name="Lapidus A."/>
            <person name="Glavina del Rio T."/>
            <person name="Dalin E."/>
            <person name="Tice H."/>
            <person name="Bruce D."/>
            <person name="Goodwin L."/>
            <person name="Pitluck S."/>
            <person name="Sims D."/>
            <person name="Brettin T."/>
            <person name="Detter J.C."/>
            <person name="Han C."/>
            <person name="Kuske C.R."/>
            <person name="Schmutz J."/>
            <person name="Larimer F."/>
            <person name="Land M."/>
            <person name="Hauser L."/>
            <person name="Kyrpides N."/>
            <person name="Lykidis A."/>
            <person name="Zhao J.-S."/>
            <person name="Richardson P."/>
        </authorList>
    </citation>
    <scope>NUCLEOTIDE SEQUENCE [LARGE SCALE GENOMIC DNA]</scope>
    <source>
        <strain>ATCC 51908 / MS32</strain>
    </source>
</reference>
<organism>
    <name type="scientific">Shewanella woodyi (strain ATCC 51908 / MS32)</name>
    <dbReference type="NCBI Taxonomy" id="392500"/>
    <lineage>
        <taxon>Bacteria</taxon>
        <taxon>Pseudomonadati</taxon>
        <taxon>Pseudomonadota</taxon>
        <taxon>Gammaproteobacteria</taxon>
        <taxon>Alteromonadales</taxon>
        <taxon>Shewanellaceae</taxon>
        <taxon>Shewanella</taxon>
    </lineage>
</organism>
<name>BIOB_SHEWM</name>
<comment type="function">
    <text evidence="1">Catalyzes the conversion of dethiobiotin (DTB) to biotin by the insertion of a sulfur atom into dethiobiotin via a radical-based mechanism.</text>
</comment>
<comment type="catalytic activity">
    <reaction evidence="1">
        <text>(4R,5S)-dethiobiotin + (sulfur carrier)-SH + 2 reduced [2Fe-2S]-[ferredoxin] + 2 S-adenosyl-L-methionine = (sulfur carrier)-H + biotin + 2 5'-deoxyadenosine + 2 L-methionine + 2 oxidized [2Fe-2S]-[ferredoxin]</text>
        <dbReference type="Rhea" id="RHEA:22060"/>
        <dbReference type="Rhea" id="RHEA-COMP:10000"/>
        <dbReference type="Rhea" id="RHEA-COMP:10001"/>
        <dbReference type="Rhea" id="RHEA-COMP:14737"/>
        <dbReference type="Rhea" id="RHEA-COMP:14739"/>
        <dbReference type="ChEBI" id="CHEBI:17319"/>
        <dbReference type="ChEBI" id="CHEBI:29917"/>
        <dbReference type="ChEBI" id="CHEBI:33737"/>
        <dbReference type="ChEBI" id="CHEBI:33738"/>
        <dbReference type="ChEBI" id="CHEBI:57586"/>
        <dbReference type="ChEBI" id="CHEBI:57844"/>
        <dbReference type="ChEBI" id="CHEBI:59789"/>
        <dbReference type="ChEBI" id="CHEBI:64428"/>
        <dbReference type="ChEBI" id="CHEBI:149473"/>
        <dbReference type="EC" id="2.8.1.6"/>
    </reaction>
</comment>
<comment type="cofactor">
    <cofactor evidence="1">
        <name>[4Fe-4S] cluster</name>
        <dbReference type="ChEBI" id="CHEBI:49883"/>
    </cofactor>
    <text evidence="1">Binds 1 [4Fe-4S] cluster. The cluster is coordinated with 3 cysteines and an exchangeable S-adenosyl-L-methionine.</text>
</comment>
<comment type="cofactor">
    <cofactor evidence="1">
        <name>[2Fe-2S] cluster</name>
        <dbReference type="ChEBI" id="CHEBI:190135"/>
    </cofactor>
    <text evidence="1">Binds 1 [2Fe-2S] cluster. The cluster is coordinated with 3 cysteines and 1 arginine.</text>
</comment>
<comment type="pathway">
    <text evidence="1">Cofactor biosynthesis; biotin biosynthesis; biotin from 7,8-diaminononanoate: step 2/2.</text>
</comment>
<comment type="subunit">
    <text evidence="1">Homodimer.</text>
</comment>
<comment type="similarity">
    <text evidence="1">Belongs to the radical SAM superfamily. Biotin synthase family.</text>
</comment>
<evidence type="ECO:0000255" key="1">
    <source>
        <dbReference type="HAMAP-Rule" id="MF_01694"/>
    </source>
</evidence>
<evidence type="ECO:0000255" key="2">
    <source>
        <dbReference type="PROSITE-ProRule" id="PRU01266"/>
    </source>
</evidence>